<accession>Q0IHQ9</accession>
<organism>
    <name type="scientific">Xenopus tropicalis</name>
    <name type="common">Western clawed frog</name>
    <name type="synonym">Silurana tropicalis</name>
    <dbReference type="NCBI Taxonomy" id="8364"/>
    <lineage>
        <taxon>Eukaryota</taxon>
        <taxon>Metazoa</taxon>
        <taxon>Chordata</taxon>
        <taxon>Craniata</taxon>
        <taxon>Vertebrata</taxon>
        <taxon>Euteleostomi</taxon>
        <taxon>Amphibia</taxon>
        <taxon>Batrachia</taxon>
        <taxon>Anura</taxon>
        <taxon>Pipoidea</taxon>
        <taxon>Pipidae</taxon>
        <taxon>Xenopodinae</taxon>
        <taxon>Xenopus</taxon>
        <taxon>Silurana</taxon>
    </lineage>
</organism>
<proteinExistence type="evidence at transcript level"/>
<name>PXYP1_XENTR</name>
<feature type="chain" id="PRO_0000314928" description="2-phosphoxylose phosphatase 1">
    <location>
        <begin position="1"/>
        <end position="501"/>
    </location>
</feature>
<feature type="topological domain" description="Cytoplasmic" evidence="3">
    <location>
        <begin position="1"/>
        <end position="6"/>
    </location>
</feature>
<feature type="transmembrane region" description="Helical; Signal-anchor for type II membrane protein" evidence="3">
    <location>
        <begin position="7"/>
        <end position="27"/>
    </location>
</feature>
<feature type="topological domain" description="Lumenal" evidence="3">
    <location>
        <begin position="28"/>
        <end position="501"/>
    </location>
</feature>
<feature type="active site" description="Nucleophile" evidence="1">
    <location>
        <position position="120"/>
    </location>
</feature>
<feature type="active site" description="Proton donor" evidence="1">
    <location>
        <position position="402"/>
    </location>
</feature>
<feature type="glycosylation site" description="N-linked (GlcNAc...) asparagine" evidence="4">
    <location>
        <position position="328"/>
    </location>
</feature>
<feature type="glycosylation site" description="N-linked (GlcNAc...) asparagine" evidence="4">
    <location>
        <position position="377"/>
    </location>
</feature>
<feature type="glycosylation site" description="N-linked (GlcNAc...) asparagine" evidence="4">
    <location>
        <position position="488"/>
    </location>
</feature>
<gene>
    <name evidence="2" type="primary">pxylp1</name>
    <name type="synonym">acpl2</name>
</gene>
<protein>
    <recommendedName>
        <fullName evidence="2">2-phosphoxylose phosphatase 1</fullName>
        <ecNumber evidence="2">3.1.3.-</ecNumber>
    </recommendedName>
    <alternativeName>
        <fullName>Acid phosphatase-like protein 2</fullName>
    </alternativeName>
</protein>
<comment type="function">
    <text evidence="2">Responsible for the 2-O-dephosphorylation of xylose in the glycosaminoglycan-protein linkage region of proteoglycans thereby regulating the amount of mature glycosaminoglycan (GAG) chains. Sulfated glycosaminoglycans (GAGs), including heparan sulfate and chondroitin sulfate, are synthesized on the so-called common GAG-protein linkage region (GlcUAbeta1-3Galbeta1-3Galbeta1-4Xylbeta1-O-Ser) of core proteins, which is formed by the stepwise addition of monosaccharide residues by the respective specific glycosyltransferases. Xylose 2-O-dephosphorylation during completion of linkage region formation is a prerequisite for the initiation and efficient elongation of the repeating disaccharide region of GAG chains.</text>
</comment>
<comment type="catalytic activity">
    <reaction evidence="2">
        <text>3-O-[beta-D-GlcA-(1-&gt;3)-beta-D-Gal-(1-&gt;3)-beta-D-Gal-(1-&gt;4)-beta-D-2-O-P-Xyl]-L-seryl-[protein] + H2O = 3-O-(beta-D-GlcA-(1-&gt;3)-beta-D-Gal-(1-&gt;3)-beta-D-Gal-(1-&gt;4)-beta-D-Xyl)-L-seryl-[protein] + phosphate</text>
        <dbReference type="Rhea" id="RHEA:56512"/>
        <dbReference type="Rhea" id="RHEA-COMP:12573"/>
        <dbReference type="Rhea" id="RHEA-COMP:14559"/>
        <dbReference type="ChEBI" id="CHEBI:15377"/>
        <dbReference type="ChEBI" id="CHEBI:43474"/>
        <dbReference type="ChEBI" id="CHEBI:132093"/>
        <dbReference type="ChEBI" id="CHEBI:140495"/>
    </reaction>
</comment>
<comment type="subcellular location">
    <subcellularLocation>
        <location evidence="2">Golgi apparatus membrane</location>
        <topology evidence="3">Single-pass type II membrane protein</topology>
    </subcellularLocation>
</comment>
<comment type="similarity">
    <text evidence="5">Belongs to the histidine acid phosphatase family.</text>
</comment>
<sequence length="501" mass="57977">MLLRNRFLLLLALAGLLAFLSLSLQFFSRWLPVSLQLKTEMQVFPEFPVRLIQVGQGREEGLGAKNRKRIMPEPLTEPPALNPLYEANLYCNTPGAKERSMEGHAPPNLKLLSVQVIIRHGDRYPLYTIPKTKRPDIDCVLEPGRKPSHPHLTDFISHMSKGVDTQMDGTLGSLPRLPNHILCEMGELTQTGVVQHLRNGQLLKEIYLKKHRLLTSAWTAKHLYFESTGKSRTLQSGLALLYSLLPNFDWKKINVKHQWSTIFCSNHCDCPMRNHYLEEEQRRQYNFRVKNSLLEKTYINMAKIVGIPTRQLRASNPIDSLLCNFCHNATFPCTKNGCIDLEHFKVIKTHQLEDEKERYEKQLYFKYALMATHPLLNQTANRMLRIAEGKKDELFALYSAHDVTLSPILSALGLREARFPRFAARLVFELWHDPEKANNHYVRVLYNGEDVTFQTSFCRDQLRSSKRPLCPLKKFSTFVQKDMFSSLNSTSYYDACHQRLF</sequence>
<dbReference type="EC" id="3.1.3.-" evidence="2"/>
<dbReference type="EMBL" id="BC123016">
    <property type="protein sequence ID" value="AAI23017.1"/>
    <property type="molecule type" value="mRNA"/>
</dbReference>
<dbReference type="RefSeq" id="NP_001072621.1">
    <property type="nucleotide sequence ID" value="NM_001079153.1"/>
</dbReference>
<dbReference type="SMR" id="Q0IHQ9"/>
<dbReference type="FunCoup" id="Q0IHQ9">
    <property type="interactions" value="925"/>
</dbReference>
<dbReference type="STRING" id="8364.ENSXETP00000001406"/>
<dbReference type="GlyCosmos" id="Q0IHQ9">
    <property type="glycosylation" value="3 sites, No reported glycans"/>
</dbReference>
<dbReference type="PaxDb" id="8364-ENSXETP00000063266"/>
<dbReference type="DNASU" id="780077"/>
<dbReference type="GeneID" id="780077"/>
<dbReference type="KEGG" id="xtr:780077"/>
<dbReference type="AGR" id="Xenbase:XB-GENE-979576"/>
<dbReference type="CTD" id="92370"/>
<dbReference type="Xenbase" id="XB-GENE-979576">
    <property type="gene designation" value="pxylp1"/>
</dbReference>
<dbReference type="eggNOG" id="KOG3672">
    <property type="taxonomic scope" value="Eukaryota"/>
</dbReference>
<dbReference type="InParanoid" id="Q0IHQ9"/>
<dbReference type="OMA" id="YIWNAAE"/>
<dbReference type="OrthoDB" id="10262962at2759"/>
<dbReference type="Proteomes" id="UP000008143">
    <property type="component" value="Chromosome 5"/>
</dbReference>
<dbReference type="GO" id="GO:0005794">
    <property type="term" value="C:Golgi apparatus"/>
    <property type="evidence" value="ECO:0000250"/>
    <property type="project" value="UniProtKB"/>
</dbReference>
<dbReference type="GO" id="GO:0000139">
    <property type="term" value="C:Golgi membrane"/>
    <property type="evidence" value="ECO:0007669"/>
    <property type="project" value="UniProtKB-SubCell"/>
</dbReference>
<dbReference type="GO" id="GO:0016791">
    <property type="term" value="F:phosphatase activity"/>
    <property type="evidence" value="ECO:0000250"/>
    <property type="project" value="UniProtKB"/>
</dbReference>
<dbReference type="GO" id="GO:0050650">
    <property type="term" value="P:chondroitin sulfate proteoglycan biosynthetic process"/>
    <property type="evidence" value="ECO:0000250"/>
    <property type="project" value="UniProtKB"/>
</dbReference>
<dbReference type="GO" id="GO:0006024">
    <property type="term" value="P:glycosaminoglycan biosynthetic process"/>
    <property type="evidence" value="ECO:0000250"/>
    <property type="project" value="UniProtKB"/>
</dbReference>
<dbReference type="GO" id="GO:0010909">
    <property type="term" value="P:positive regulation of heparan sulfate proteoglycan biosynthetic process"/>
    <property type="evidence" value="ECO:0000250"/>
    <property type="project" value="UniProtKB"/>
</dbReference>
<dbReference type="CDD" id="cd07061">
    <property type="entry name" value="HP_HAP_like"/>
    <property type="match status" value="1"/>
</dbReference>
<dbReference type="FunFam" id="3.40.50.1240:FF:000011">
    <property type="entry name" value="2-phosphoxylose phosphatase 1"/>
    <property type="match status" value="1"/>
</dbReference>
<dbReference type="Gene3D" id="3.40.50.1240">
    <property type="entry name" value="Phosphoglycerate mutase-like"/>
    <property type="match status" value="1"/>
</dbReference>
<dbReference type="InterPro" id="IPR033379">
    <property type="entry name" value="Acid_Pase_AS"/>
</dbReference>
<dbReference type="InterPro" id="IPR000560">
    <property type="entry name" value="His_Pase_clade-2"/>
</dbReference>
<dbReference type="InterPro" id="IPR029033">
    <property type="entry name" value="His_PPase_superfam"/>
</dbReference>
<dbReference type="InterPro" id="IPR050645">
    <property type="entry name" value="Histidine_acid_phosphatase"/>
</dbReference>
<dbReference type="PANTHER" id="PTHR11567:SF110">
    <property type="entry name" value="2-PHOSPHOXYLOSE PHOSPHATASE 1"/>
    <property type="match status" value="1"/>
</dbReference>
<dbReference type="PANTHER" id="PTHR11567">
    <property type="entry name" value="ACID PHOSPHATASE-RELATED"/>
    <property type="match status" value="1"/>
</dbReference>
<dbReference type="Pfam" id="PF00328">
    <property type="entry name" value="His_Phos_2"/>
    <property type="match status" value="1"/>
</dbReference>
<dbReference type="SUPFAM" id="SSF53254">
    <property type="entry name" value="Phosphoglycerate mutase-like"/>
    <property type="match status" value="1"/>
</dbReference>
<dbReference type="PROSITE" id="PS00616">
    <property type="entry name" value="HIS_ACID_PHOSPHAT_1"/>
    <property type="match status" value="1"/>
</dbReference>
<evidence type="ECO:0000250" key="1"/>
<evidence type="ECO:0000250" key="2">
    <source>
        <dbReference type="UniProtKB" id="Q8TE99"/>
    </source>
</evidence>
<evidence type="ECO:0000255" key="3"/>
<evidence type="ECO:0000255" key="4">
    <source>
        <dbReference type="PROSITE-ProRule" id="PRU00498"/>
    </source>
</evidence>
<evidence type="ECO:0000305" key="5"/>
<reference key="1">
    <citation type="submission" date="2006-09" db="EMBL/GenBank/DDBJ databases">
        <authorList>
            <consortium name="NIH - Xenopus Gene Collection (XGC) project"/>
        </authorList>
    </citation>
    <scope>NUCLEOTIDE SEQUENCE [LARGE SCALE MRNA]</scope>
    <source>
        <tissue>Testis</tissue>
    </source>
</reference>
<keyword id="KW-0325">Glycoprotein</keyword>
<keyword id="KW-0333">Golgi apparatus</keyword>
<keyword id="KW-0378">Hydrolase</keyword>
<keyword id="KW-0472">Membrane</keyword>
<keyword id="KW-1185">Reference proteome</keyword>
<keyword id="KW-0735">Signal-anchor</keyword>
<keyword id="KW-0812">Transmembrane</keyword>
<keyword id="KW-1133">Transmembrane helix</keyword>